<reference key="1">
    <citation type="journal article" date="2009" name="PLoS ONE">
        <title>Genome degradation in Brucella ovis corresponds with narrowing of its host range and tissue tropism.</title>
        <authorList>
            <person name="Tsolis R.M."/>
            <person name="Seshadri R."/>
            <person name="Santos R.L."/>
            <person name="Sangari F.J."/>
            <person name="Lobo J.M."/>
            <person name="de Jong M.F."/>
            <person name="Ren Q."/>
            <person name="Myers G."/>
            <person name="Brinkac L.M."/>
            <person name="Nelson W.C."/>
            <person name="Deboy R.T."/>
            <person name="Angiuoli S."/>
            <person name="Khouri H."/>
            <person name="Dimitrov G."/>
            <person name="Robinson J.R."/>
            <person name="Mulligan S."/>
            <person name="Walker R.L."/>
            <person name="Elzer P.E."/>
            <person name="Hassan K.A."/>
            <person name="Paulsen I.T."/>
        </authorList>
    </citation>
    <scope>NUCLEOTIDE SEQUENCE [LARGE SCALE GENOMIC DNA]</scope>
    <source>
        <strain>ATCC 25840 / 63/290 / NCTC 10512</strain>
    </source>
</reference>
<sequence length="398" mass="43229">MSLNSLDLPGKPEDTRVVVAMSGGVDSSVVAGILKREGYDVVGVTLQLYDHGAAVHRAGSCCAGQDIEDARRVSESLGIPHYVLDYEARFREAVIDPFANSYVSGETPIPCVSCNQTVKFADLLQTARDLGADALATGHYIRSRANGAHRALYRPVDTDRDQSYFLFATTQEQIDYLRFPLGHLPKAQVREIAEELGLTVAKKQDSQDICFVPQGKYSDIISRLKPEAANPGDIVHIDGRTLGRHDGIVHYTVGQRRGIGVATGEALYVVHLDAANARVIVGPREALETHKVFLRDVNWLGDTPIADLPKSGMEVFAKVRSTRPPRPAVLRHADGQTWVELVDGESGIAPGQACVLYSDDSNAARVFGGGFIGRSEREPQAEEMLRRLMANADKASAA</sequence>
<gene>
    <name evidence="1" type="primary">mnmA</name>
    <name type="synonym">trmU</name>
    <name type="ordered locus">BOV_1534</name>
</gene>
<name>MNMA_BRUO2</name>
<protein>
    <recommendedName>
        <fullName evidence="1">tRNA-specific 2-thiouridylase MnmA</fullName>
        <ecNumber evidence="1">2.8.1.13</ecNumber>
    </recommendedName>
</protein>
<comment type="function">
    <text evidence="1">Catalyzes the 2-thiolation of uridine at the wobble position (U34) of tRNA, leading to the formation of s(2)U34.</text>
</comment>
<comment type="catalytic activity">
    <reaction evidence="1">
        <text>S-sulfanyl-L-cysteinyl-[protein] + uridine(34) in tRNA + AH2 + ATP = 2-thiouridine(34) in tRNA + L-cysteinyl-[protein] + A + AMP + diphosphate + H(+)</text>
        <dbReference type="Rhea" id="RHEA:47032"/>
        <dbReference type="Rhea" id="RHEA-COMP:10131"/>
        <dbReference type="Rhea" id="RHEA-COMP:11726"/>
        <dbReference type="Rhea" id="RHEA-COMP:11727"/>
        <dbReference type="Rhea" id="RHEA-COMP:11728"/>
        <dbReference type="ChEBI" id="CHEBI:13193"/>
        <dbReference type="ChEBI" id="CHEBI:15378"/>
        <dbReference type="ChEBI" id="CHEBI:17499"/>
        <dbReference type="ChEBI" id="CHEBI:29950"/>
        <dbReference type="ChEBI" id="CHEBI:30616"/>
        <dbReference type="ChEBI" id="CHEBI:33019"/>
        <dbReference type="ChEBI" id="CHEBI:61963"/>
        <dbReference type="ChEBI" id="CHEBI:65315"/>
        <dbReference type="ChEBI" id="CHEBI:87170"/>
        <dbReference type="ChEBI" id="CHEBI:456215"/>
        <dbReference type="EC" id="2.8.1.13"/>
    </reaction>
</comment>
<comment type="subcellular location">
    <subcellularLocation>
        <location evidence="1">Cytoplasm</location>
    </subcellularLocation>
</comment>
<comment type="similarity">
    <text evidence="1">Belongs to the MnmA/TRMU family.</text>
</comment>
<proteinExistence type="inferred from homology"/>
<dbReference type="EC" id="2.8.1.13" evidence="1"/>
<dbReference type="EMBL" id="CP000708">
    <property type="protein sequence ID" value="ABQ61073.1"/>
    <property type="molecule type" value="Genomic_DNA"/>
</dbReference>
<dbReference type="SMR" id="A5VRW1"/>
<dbReference type="KEGG" id="bov:BOV_1534"/>
<dbReference type="HOGENOM" id="CLU_035188_0_1_5"/>
<dbReference type="PhylomeDB" id="A5VRW1"/>
<dbReference type="Proteomes" id="UP000006383">
    <property type="component" value="Chromosome I"/>
</dbReference>
<dbReference type="GO" id="GO:0005737">
    <property type="term" value="C:cytoplasm"/>
    <property type="evidence" value="ECO:0007669"/>
    <property type="project" value="UniProtKB-SubCell"/>
</dbReference>
<dbReference type="GO" id="GO:0005524">
    <property type="term" value="F:ATP binding"/>
    <property type="evidence" value="ECO:0007669"/>
    <property type="project" value="UniProtKB-KW"/>
</dbReference>
<dbReference type="GO" id="GO:0000049">
    <property type="term" value="F:tRNA binding"/>
    <property type="evidence" value="ECO:0007669"/>
    <property type="project" value="UniProtKB-KW"/>
</dbReference>
<dbReference type="GO" id="GO:0103016">
    <property type="term" value="F:tRNA-uridine 2-sulfurtransferase activity"/>
    <property type="evidence" value="ECO:0007669"/>
    <property type="project" value="UniProtKB-EC"/>
</dbReference>
<dbReference type="GO" id="GO:0002143">
    <property type="term" value="P:tRNA wobble position uridine thiolation"/>
    <property type="evidence" value="ECO:0007669"/>
    <property type="project" value="TreeGrafter"/>
</dbReference>
<dbReference type="CDD" id="cd01998">
    <property type="entry name" value="MnmA_TRMU-like"/>
    <property type="match status" value="1"/>
</dbReference>
<dbReference type="FunFam" id="2.30.30.280:FF:000001">
    <property type="entry name" value="tRNA-specific 2-thiouridylase MnmA"/>
    <property type="match status" value="1"/>
</dbReference>
<dbReference type="FunFam" id="3.40.50.620:FF:000115">
    <property type="entry name" value="tRNA-specific 2-thiouridylase MnmA"/>
    <property type="match status" value="1"/>
</dbReference>
<dbReference type="Gene3D" id="2.30.30.280">
    <property type="entry name" value="Adenine nucleotide alpha hydrolases-like domains"/>
    <property type="match status" value="1"/>
</dbReference>
<dbReference type="Gene3D" id="3.40.50.620">
    <property type="entry name" value="HUPs"/>
    <property type="match status" value="1"/>
</dbReference>
<dbReference type="Gene3D" id="2.40.30.10">
    <property type="entry name" value="Translation factors"/>
    <property type="match status" value="1"/>
</dbReference>
<dbReference type="HAMAP" id="MF_00144">
    <property type="entry name" value="tRNA_thiouridyl_MnmA"/>
    <property type="match status" value="1"/>
</dbReference>
<dbReference type="InterPro" id="IPR004506">
    <property type="entry name" value="MnmA-like"/>
</dbReference>
<dbReference type="InterPro" id="IPR046885">
    <property type="entry name" value="MnmA-like_C"/>
</dbReference>
<dbReference type="InterPro" id="IPR046884">
    <property type="entry name" value="MnmA-like_central"/>
</dbReference>
<dbReference type="InterPro" id="IPR023382">
    <property type="entry name" value="MnmA-like_central_sf"/>
</dbReference>
<dbReference type="InterPro" id="IPR014729">
    <property type="entry name" value="Rossmann-like_a/b/a_fold"/>
</dbReference>
<dbReference type="NCBIfam" id="NF001138">
    <property type="entry name" value="PRK00143.1"/>
    <property type="match status" value="1"/>
</dbReference>
<dbReference type="NCBIfam" id="TIGR00420">
    <property type="entry name" value="trmU"/>
    <property type="match status" value="1"/>
</dbReference>
<dbReference type="PANTHER" id="PTHR11933:SF5">
    <property type="entry name" value="MITOCHONDRIAL TRNA-SPECIFIC 2-THIOURIDYLASE 1"/>
    <property type="match status" value="1"/>
</dbReference>
<dbReference type="PANTHER" id="PTHR11933">
    <property type="entry name" value="TRNA 5-METHYLAMINOMETHYL-2-THIOURIDYLATE -METHYLTRANSFERASE"/>
    <property type="match status" value="1"/>
</dbReference>
<dbReference type="Pfam" id="PF03054">
    <property type="entry name" value="tRNA_Me_trans"/>
    <property type="match status" value="1"/>
</dbReference>
<dbReference type="Pfam" id="PF20258">
    <property type="entry name" value="tRNA_Me_trans_C"/>
    <property type="match status" value="1"/>
</dbReference>
<dbReference type="Pfam" id="PF20259">
    <property type="entry name" value="tRNA_Me_trans_M"/>
    <property type="match status" value="1"/>
</dbReference>
<dbReference type="SUPFAM" id="SSF52402">
    <property type="entry name" value="Adenine nucleotide alpha hydrolases-like"/>
    <property type="match status" value="1"/>
</dbReference>
<feature type="chain" id="PRO_1000009512" description="tRNA-specific 2-thiouridylase MnmA">
    <location>
        <begin position="1"/>
        <end position="398"/>
    </location>
</feature>
<feature type="region of interest" description="Interaction with tRNA" evidence="1">
    <location>
        <begin position="160"/>
        <end position="162"/>
    </location>
</feature>
<feature type="active site" description="Nucleophile" evidence="1">
    <location>
        <position position="114"/>
    </location>
</feature>
<feature type="active site" description="Cysteine persulfide intermediate" evidence="1">
    <location>
        <position position="210"/>
    </location>
</feature>
<feature type="binding site" evidence="1">
    <location>
        <begin position="20"/>
        <end position="27"/>
    </location>
    <ligand>
        <name>ATP</name>
        <dbReference type="ChEBI" id="CHEBI:30616"/>
    </ligand>
</feature>
<feature type="binding site" evidence="1">
    <location>
        <position position="46"/>
    </location>
    <ligand>
        <name>ATP</name>
        <dbReference type="ChEBI" id="CHEBI:30616"/>
    </ligand>
</feature>
<feature type="binding site" evidence="1">
    <location>
        <position position="138"/>
    </location>
    <ligand>
        <name>ATP</name>
        <dbReference type="ChEBI" id="CHEBI:30616"/>
    </ligand>
</feature>
<feature type="site" description="Interaction with tRNA" evidence="1">
    <location>
        <position position="139"/>
    </location>
</feature>
<feature type="site" description="Interaction with tRNA" evidence="1">
    <location>
        <position position="352"/>
    </location>
</feature>
<feature type="disulfide bond" description="Alternate" evidence="1">
    <location>
        <begin position="114"/>
        <end position="210"/>
    </location>
</feature>
<keyword id="KW-0067">ATP-binding</keyword>
<keyword id="KW-0963">Cytoplasm</keyword>
<keyword id="KW-1015">Disulfide bond</keyword>
<keyword id="KW-0547">Nucleotide-binding</keyword>
<keyword id="KW-0694">RNA-binding</keyword>
<keyword id="KW-0808">Transferase</keyword>
<keyword id="KW-0819">tRNA processing</keyword>
<keyword id="KW-0820">tRNA-binding</keyword>
<accession>A5VRW1</accession>
<evidence type="ECO:0000255" key="1">
    <source>
        <dbReference type="HAMAP-Rule" id="MF_00144"/>
    </source>
</evidence>
<organism>
    <name type="scientific">Brucella ovis (strain ATCC 25840 / 63/290 / NCTC 10512)</name>
    <dbReference type="NCBI Taxonomy" id="444178"/>
    <lineage>
        <taxon>Bacteria</taxon>
        <taxon>Pseudomonadati</taxon>
        <taxon>Pseudomonadota</taxon>
        <taxon>Alphaproteobacteria</taxon>
        <taxon>Hyphomicrobiales</taxon>
        <taxon>Brucellaceae</taxon>
        <taxon>Brucella/Ochrobactrum group</taxon>
        <taxon>Brucella</taxon>
    </lineage>
</organism>